<feature type="chain" id="PRO_0000272581" description="Phosphate import ATP-binding protein PstB 2">
    <location>
        <begin position="1"/>
        <end position="258"/>
    </location>
</feature>
<feature type="domain" description="ABC transporter" evidence="1">
    <location>
        <begin position="12"/>
        <end position="253"/>
    </location>
</feature>
<feature type="binding site" evidence="1">
    <location>
        <begin position="44"/>
        <end position="51"/>
    </location>
    <ligand>
        <name>ATP</name>
        <dbReference type="ChEBI" id="CHEBI:30616"/>
    </ligand>
</feature>
<reference key="1">
    <citation type="journal article" date="2006" name="J. Bacteriol.">
        <title>Complete genome sequence of Yersinia pestis strains Antiqua and Nepal516: evidence of gene reduction in an emerging pathogen.</title>
        <authorList>
            <person name="Chain P.S.G."/>
            <person name="Hu P."/>
            <person name="Malfatti S.A."/>
            <person name="Radnedge L."/>
            <person name="Larimer F."/>
            <person name="Vergez L.M."/>
            <person name="Worsham P."/>
            <person name="Chu M.C."/>
            <person name="Andersen G.L."/>
        </authorList>
    </citation>
    <scope>NUCLEOTIDE SEQUENCE [LARGE SCALE GENOMIC DNA]</scope>
    <source>
        <strain>Nepal516</strain>
    </source>
</reference>
<reference key="2">
    <citation type="submission" date="2009-04" db="EMBL/GenBank/DDBJ databases">
        <title>Yersinia pestis Nepal516A whole genome shotgun sequencing project.</title>
        <authorList>
            <person name="Plunkett G. III"/>
            <person name="Anderson B.D."/>
            <person name="Baumler D.J."/>
            <person name="Burland V."/>
            <person name="Cabot E.L."/>
            <person name="Glasner J.D."/>
            <person name="Mau B."/>
            <person name="Neeno-Eckwall E."/>
            <person name="Perna N.T."/>
            <person name="Munk A.C."/>
            <person name="Tapia R."/>
            <person name="Green L.D."/>
            <person name="Rogers Y.C."/>
            <person name="Detter J.C."/>
            <person name="Bruce D.C."/>
            <person name="Brettin T.S."/>
        </authorList>
    </citation>
    <scope>NUCLEOTIDE SEQUENCE [LARGE SCALE GENOMIC DNA]</scope>
    <source>
        <strain>Nepal516</strain>
    </source>
</reference>
<name>PSTB2_YERPN</name>
<gene>
    <name evidence="1" type="primary">pstB2</name>
    <name type="ordered locus">YPN_3971</name>
    <name type="ORF">YP516_4505</name>
</gene>
<protein>
    <recommendedName>
        <fullName evidence="1">Phosphate import ATP-binding protein PstB 2</fullName>
        <ecNumber evidence="1">7.3.2.1</ecNumber>
    </recommendedName>
    <alternativeName>
        <fullName evidence="1">ABC phosphate transporter 2</fullName>
    </alternativeName>
    <alternativeName>
        <fullName evidence="1">Phosphate-transporting ATPase 2</fullName>
    </alternativeName>
</protein>
<keyword id="KW-0067">ATP-binding</keyword>
<keyword id="KW-0997">Cell inner membrane</keyword>
<keyword id="KW-1003">Cell membrane</keyword>
<keyword id="KW-0472">Membrane</keyword>
<keyword id="KW-0547">Nucleotide-binding</keyword>
<keyword id="KW-0592">Phosphate transport</keyword>
<keyword id="KW-1278">Translocase</keyword>
<keyword id="KW-0813">Transport</keyword>
<sequence length="258" mass="29040">MSMATDVTNSKIQVRDLNFYYGKFHALKNISLDIAKNQVTAFIGPSGCGKSTLLRTFNKMYQLYPEQRAEGDILLDGQNILTDKQDIALLRAKVGMVFQKPTPFPMSIYDNIAFGVKLFESLSRADMDERVQWALTKAALWNETKDKLHQSGYSLSGGQQQRLCIARGIAIRPDVLLLDEPCSALDPISTGRIEELISELKSDYTVVIVTHNMQQAARCSDHTAFMYLGELIEFSDTDTLFTTPQQKQTEDYITGRYG</sequence>
<comment type="function">
    <text evidence="1">Part of the ABC transporter complex PstSACB involved in phosphate import. Responsible for energy coupling to the transport system.</text>
</comment>
<comment type="catalytic activity">
    <reaction evidence="1">
        <text>phosphate(out) + ATP + H2O = ADP + 2 phosphate(in) + H(+)</text>
        <dbReference type="Rhea" id="RHEA:24440"/>
        <dbReference type="ChEBI" id="CHEBI:15377"/>
        <dbReference type="ChEBI" id="CHEBI:15378"/>
        <dbReference type="ChEBI" id="CHEBI:30616"/>
        <dbReference type="ChEBI" id="CHEBI:43474"/>
        <dbReference type="ChEBI" id="CHEBI:456216"/>
        <dbReference type="EC" id="7.3.2.1"/>
    </reaction>
</comment>
<comment type="subunit">
    <text evidence="1">The complex is composed of two ATP-binding proteins (PstB), two transmembrane proteins (PstC and PstA) and a solute-binding protein (PstS).</text>
</comment>
<comment type="subcellular location">
    <subcellularLocation>
        <location evidence="1">Cell inner membrane</location>
        <topology evidence="1">Peripheral membrane protein</topology>
    </subcellularLocation>
</comment>
<comment type="similarity">
    <text evidence="1">Belongs to the ABC transporter superfamily. Phosphate importer (TC 3.A.1.7) family.</text>
</comment>
<dbReference type="EC" id="7.3.2.1" evidence="1"/>
<dbReference type="EMBL" id="CP000305">
    <property type="protein sequence ID" value="ABG20298.1"/>
    <property type="molecule type" value="Genomic_DNA"/>
</dbReference>
<dbReference type="EMBL" id="ACNQ01000019">
    <property type="protein sequence ID" value="EEO74895.1"/>
    <property type="molecule type" value="Genomic_DNA"/>
</dbReference>
<dbReference type="SMR" id="Q1CCI2"/>
<dbReference type="KEGG" id="ypn:YPN_3971"/>
<dbReference type="HOGENOM" id="CLU_000604_1_22_6"/>
<dbReference type="Proteomes" id="UP000008936">
    <property type="component" value="Chromosome"/>
</dbReference>
<dbReference type="GO" id="GO:0005886">
    <property type="term" value="C:plasma membrane"/>
    <property type="evidence" value="ECO:0007669"/>
    <property type="project" value="UniProtKB-SubCell"/>
</dbReference>
<dbReference type="GO" id="GO:0005524">
    <property type="term" value="F:ATP binding"/>
    <property type="evidence" value="ECO:0007669"/>
    <property type="project" value="UniProtKB-KW"/>
</dbReference>
<dbReference type="GO" id="GO:0016887">
    <property type="term" value="F:ATP hydrolysis activity"/>
    <property type="evidence" value="ECO:0007669"/>
    <property type="project" value="InterPro"/>
</dbReference>
<dbReference type="GO" id="GO:0015415">
    <property type="term" value="F:ATPase-coupled phosphate ion transmembrane transporter activity"/>
    <property type="evidence" value="ECO:0007669"/>
    <property type="project" value="UniProtKB-EC"/>
</dbReference>
<dbReference type="GO" id="GO:0035435">
    <property type="term" value="P:phosphate ion transmembrane transport"/>
    <property type="evidence" value="ECO:0007669"/>
    <property type="project" value="InterPro"/>
</dbReference>
<dbReference type="CDD" id="cd03260">
    <property type="entry name" value="ABC_PstB_phosphate_transporter"/>
    <property type="match status" value="1"/>
</dbReference>
<dbReference type="FunFam" id="3.40.50.300:FF:000132">
    <property type="entry name" value="Phosphate import ATP-binding protein PstB"/>
    <property type="match status" value="1"/>
</dbReference>
<dbReference type="Gene3D" id="3.40.50.300">
    <property type="entry name" value="P-loop containing nucleotide triphosphate hydrolases"/>
    <property type="match status" value="1"/>
</dbReference>
<dbReference type="InterPro" id="IPR003593">
    <property type="entry name" value="AAA+_ATPase"/>
</dbReference>
<dbReference type="InterPro" id="IPR003439">
    <property type="entry name" value="ABC_transporter-like_ATP-bd"/>
</dbReference>
<dbReference type="InterPro" id="IPR017871">
    <property type="entry name" value="ABC_transporter-like_CS"/>
</dbReference>
<dbReference type="InterPro" id="IPR027417">
    <property type="entry name" value="P-loop_NTPase"/>
</dbReference>
<dbReference type="InterPro" id="IPR005670">
    <property type="entry name" value="PstB-like"/>
</dbReference>
<dbReference type="NCBIfam" id="TIGR00972">
    <property type="entry name" value="3a0107s01c2"/>
    <property type="match status" value="1"/>
</dbReference>
<dbReference type="PANTHER" id="PTHR43423">
    <property type="entry name" value="ABC TRANSPORTER I FAMILY MEMBER 17"/>
    <property type="match status" value="1"/>
</dbReference>
<dbReference type="PANTHER" id="PTHR43423:SF3">
    <property type="entry name" value="PHOSPHATE IMPORT ATP-BINDING PROTEIN PSTB"/>
    <property type="match status" value="1"/>
</dbReference>
<dbReference type="Pfam" id="PF00005">
    <property type="entry name" value="ABC_tran"/>
    <property type="match status" value="1"/>
</dbReference>
<dbReference type="SMART" id="SM00382">
    <property type="entry name" value="AAA"/>
    <property type="match status" value="1"/>
</dbReference>
<dbReference type="SUPFAM" id="SSF52540">
    <property type="entry name" value="P-loop containing nucleoside triphosphate hydrolases"/>
    <property type="match status" value="1"/>
</dbReference>
<dbReference type="PROSITE" id="PS00211">
    <property type="entry name" value="ABC_TRANSPORTER_1"/>
    <property type="match status" value="1"/>
</dbReference>
<dbReference type="PROSITE" id="PS50893">
    <property type="entry name" value="ABC_TRANSPORTER_2"/>
    <property type="match status" value="1"/>
</dbReference>
<dbReference type="PROSITE" id="PS51238">
    <property type="entry name" value="PSTB"/>
    <property type="match status" value="1"/>
</dbReference>
<accession>Q1CCI2</accession>
<accession>D1Q2Z2</accession>
<proteinExistence type="inferred from homology"/>
<evidence type="ECO:0000255" key="1">
    <source>
        <dbReference type="HAMAP-Rule" id="MF_01702"/>
    </source>
</evidence>
<organism>
    <name type="scientific">Yersinia pestis bv. Antiqua (strain Nepal516)</name>
    <dbReference type="NCBI Taxonomy" id="377628"/>
    <lineage>
        <taxon>Bacteria</taxon>
        <taxon>Pseudomonadati</taxon>
        <taxon>Pseudomonadota</taxon>
        <taxon>Gammaproteobacteria</taxon>
        <taxon>Enterobacterales</taxon>
        <taxon>Yersiniaceae</taxon>
        <taxon>Yersinia</taxon>
    </lineage>
</organism>